<accession>B7GP38</accession>
<accession>E8MQ59</accession>
<protein>
    <recommendedName>
        <fullName evidence="2">tRNA (guanine-N(7)-)-methyltransferase</fullName>
        <ecNumber evidence="2">2.1.1.33</ecNumber>
    </recommendedName>
    <alternativeName>
        <fullName evidence="2">tRNA (guanine(46)-N(7))-methyltransferase</fullName>
    </alternativeName>
    <alternativeName>
        <fullName evidence="2">tRNA(m7G46)-methyltransferase</fullName>
    </alternativeName>
</protein>
<feature type="chain" id="PRO_1000149646" description="tRNA (guanine-N(7)-)-methyltransferase">
    <location>
        <begin position="1"/>
        <end position="286"/>
    </location>
</feature>
<feature type="active site" evidence="1">
    <location>
        <position position="165"/>
    </location>
</feature>
<feature type="binding site" evidence="2">
    <location>
        <position position="91"/>
    </location>
    <ligand>
        <name>S-adenosyl-L-methionine</name>
        <dbReference type="ChEBI" id="CHEBI:59789"/>
    </ligand>
</feature>
<feature type="binding site" evidence="2">
    <location>
        <position position="116"/>
    </location>
    <ligand>
        <name>S-adenosyl-L-methionine</name>
        <dbReference type="ChEBI" id="CHEBI:59789"/>
    </ligand>
</feature>
<feature type="binding site" evidence="2">
    <location>
        <position position="143"/>
    </location>
    <ligand>
        <name>S-adenosyl-L-methionine</name>
        <dbReference type="ChEBI" id="CHEBI:59789"/>
    </ligand>
</feature>
<feature type="binding site" evidence="2">
    <location>
        <position position="165"/>
    </location>
    <ligand>
        <name>S-adenosyl-L-methionine</name>
        <dbReference type="ChEBI" id="CHEBI:59789"/>
    </ligand>
</feature>
<feature type="binding site" evidence="2">
    <location>
        <position position="169"/>
    </location>
    <ligand>
        <name>substrate</name>
    </ligand>
</feature>
<feature type="binding site" evidence="2">
    <location>
        <position position="201"/>
    </location>
    <ligand>
        <name>substrate</name>
    </ligand>
</feature>
<feature type="binding site" evidence="2">
    <location>
        <begin position="262"/>
        <end position="265"/>
    </location>
    <ligand>
        <name>substrate</name>
    </ligand>
</feature>
<sequence>MTDPESTAIDSVAAMATDHTEAPAHPLHKVLSFVRRSGRLDDRLQRAWDNYAGTYLLDIAAGNLLDVREGVTLDRALVESAWGNDNPLIVEIGTGQGENVVAAAAAHPETNFLALEVYDPGVAHTLLLAGKQGLTNIRVAQVNAPELFKVTAPGTAAEVWTFFPDPWPKKKHHKRRIVQEAMAGDIHRALAADGVWRIATDIEDYALHVHEVMDGLDGWKNLGSVTVSLPLEHVGKGNADLAADMPHADFTESERFEGRVLTNFEKKGLAAGRVIHDFTYQAVALH</sequence>
<proteinExistence type="inferred from homology"/>
<keyword id="KW-0489">Methyltransferase</keyword>
<keyword id="KW-0949">S-adenosyl-L-methionine</keyword>
<keyword id="KW-0808">Transferase</keyword>
<keyword id="KW-0819">tRNA processing</keyword>
<reference key="1">
    <citation type="journal article" date="2008" name="Proc. Natl. Acad. Sci. U.S.A.">
        <title>The genome sequence of Bifidobacterium longum subsp. infantis reveals adaptations for milk utilization within the infant microbiome.</title>
        <authorList>
            <person name="Sela D.A."/>
            <person name="Chapman J."/>
            <person name="Adeuya A."/>
            <person name="Kim J.H."/>
            <person name="Chen F."/>
            <person name="Whitehead T.R."/>
            <person name="Lapidus A."/>
            <person name="Rokhsar D.S."/>
            <person name="Lebrilla C.B."/>
            <person name="German J.B."/>
            <person name="Price N.P."/>
            <person name="Richardson P.M."/>
            <person name="Mills D.A."/>
        </authorList>
    </citation>
    <scope>NUCLEOTIDE SEQUENCE [LARGE SCALE GENOMIC DNA]</scope>
    <source>
        <strain>ATCC 15697 / DSM 20088 / JCM 1222 / NCTC 11817 / S12</strain>
    </source>
</reference>
<reference key="2">
    <citation type="journal article" date="2011" name="Nature">
        <title>Bifidobacteria can protect from enteropathogenic infection through production of acetate.</title>
        <authorList>
            <person name="Fukuda S."/>
            <person name="Toh H."/>
            <person name="Hase K."/>
            <person name="Oshima K."/>
            <person name="Nakanishi Y."/>
            <person name="Yoshimura K."/>
            <person name="Tobe T."/>
            <person name="Clarke J.M."/>
            <person name="Topping D.L."/>
            <person name="Suzuki T."/>
            <person name="Taylor T.D."/>
            <person name="Itoh K."/>
            <person name="Kikuchi J."/>
            <person name="Morita H."/>
            <person name="Hattori M."/>
            <person name="Ohno H."/>
        </authorList>
    </citation>
    <scope>NUCLEOTIDE SEQUENCE [LARGE SCALE GENOMIC DNA]</scope>
    <source>
        <strain>ATCC 15697 / DSM 20088 / JCM 1222 / NCTC 11817 / S12</strain>
    </source>
</reference>
<gene>
    <name evidence="2" type="primary">trmB</name>
    <name type="ordered locus">Blon_0537</name>
    <name type="ordered locus">BLIJ_0540</name>
</gene>
<organism>
    <name type="scientific">Bifidobacterium longum subsp. infantis (strain ATCC 15697 / DSM 20088 / JCM 1222 / NCTC 11817 / S12)</name>
    <dbReference type="NCBI Taxonomy" id="391904"/>
    <lineage>
        <taxon>Bacteria</taxon>
        <taxon>Bacillati</taxon>
        <taxon>Actinomycetota</taxon>
        <taxon>Actinomycetes</taxon>
        <taxon>Bifidobacteriales</taxon>
        <taxon>Bifidobacteriaceae</taxon>
        <taxon>Bifidobacterium</taxon>
    </lineage>
</organism>
<comment type="function">
    <text evidence="2">Catalyzes the formation of N(7)-methylguanine at position 46 (m7G46) in tRNA.</text>
</comment>
<comment type="catalytic activity">
    <reaction evidence="2">
        <text>guanosine(46) in tRNA + S-adenosyl-L-methionine = N(7)-methylguanosine(46) in tRNA + S-adenosyl-L-homocysteine</text>
        <dbReference type="Rhea" id="RHEA:42708"/>
        <dbReference type="Rhea" id="RHEA-COMP:10188"/>
        <dbReference type="Rhea" id="RHEA-COMP:10189"/>
        <dbReference type="ChEBI" id="CHEBI:57856"/>
        <dbReference type="ChEBI" id="CHEBI:59789"/>
        <dbReference type="ChEBI" id="CHEBI:74269"/>
        <dbReference type="ChEBI" id="CHEBI:74480"/>
        <dbReference type="EC" id="2.1.1.33"/>
    </reaction>
</comment>
<comment type="pathway">
    <text evidence="2">tRNA modification; N(7)-methylguanine-tRNA biosynthesis.</text>
</comment>
<comment type="similarity">
    <text evidence="2">Belongs to the class I-like SAM-binding methyltransferase superfamily. TrmB family.</text>
</comment>
<comment type="sequence caution" evidence="3">
    <conflict type="erroneous initiation">
        <sequence resource="EMBL-CDS" id="BAJ68134"/>
    </conflict>
    <text>Extended N-terminus.</text>
</comment>
<evidence type="ECO:0000250" key="1"/>
<evidence type="ECO:0000255" key="2">
    <source>
        <dbReference type="HAMAP-Rule" id="MF_01057"/>
    </source>
</evidence>
<evidence type="ECO:0000305" key="3"/>
<name>TRMB_BIFLS</name>
<dbReference type="EC" id="2.1.1.33" evidence="2"/>
<dbReference type="EMBL" id="CP001095">
    <property type="protein sequence ID" value="ACJ51650.1"/>
    <property type="molecule type" value="Genomic_DNA"/>
</dbReference>
<dbReference type="EMBL" id="AP010889">
    <property type="protein sequence ID" value="BAJ68134.1"/>
    <property type="status" value="ALT_INIT"/>
    <property type="molecule type" value="Genomic_DNA"/>
</dbReference>
<dbReference type="SMR" id="B7GP38"/>
<dbReference type="KEGG" id="bln:Blon_0537"/>
<dbReference type="KEGG" id="blon:BLIJ_0540"/>
<dbReference type="PATRIC" id="fig|391904.8.peg.540"/>
<dbReference type="HOGENOM" id="CLU_050910_0_0_11"/>
<dbReference type="UniPathway" id="UPA00989"/>
<dbReference type="Proteomes" id="UP000001360">
    <property type="component" value="Chromosome"/>
</dbReference>
<dbReference type="GO" id="GO:0043527">
    <property type="term" value="C:tRNA methyltransferase complex"/>
    <property type="evidence" value="ECO:0007669"/>
    <property type="project" value="TreeGrafter"/>
</dbReference>
<dbReference type="GO" id="GO:0008176">
    <property type="term" value="F:tRNA (guanine(46)-N7)-methyltransferase activity"/>
    <property type="evidence" value="ECO:0007669"/>
    <property type="project" value="UniProtKB-UniRule"/>
</dbReference>
<dbReference type="Gene3D" id="3.40.50.150">
    <property type="entry name" value="Vaccinia Virus protein VP39"/>
    <property type="match status" value="1"/>
</dbReference>
<dbReference type="HAMAP" id="MF_01057">
    <property type="entry name" value="tRNA_methyltr_TrmB"/>
    <property type="match status" value="1"/>
</dbReference>
<dbReference type="InterPro" id="IPR029063">
    <property type="entry name" value="SAM-dependent_MTases_sf"/>
</dbReference>
<dbReference type="InterPro" id="IPR003358">
    <property type="entry name" value="tRNA_(Gua-N-7)_MeTrfase_Trmb"/>
</dbReference>
<dbReference type="InterPro" id="IPR055361">
    <property type="entry name" value="tRNA_methyltr_TrmB_bact"/>
</dbReference>
<dbReference type="NCBIfam" id="TIGR00091">
    <property type="entry name" value="tRNA (guanosine(46)-N7)-methyltransferase TrmB"/>
    <property type="match status" value="1"/>
</dbReference>
<dbReference type="PANTHER" id="PTHR23417">
    <property type="entry name" value="3-DEOXY-D-MANNO-OCTULOSONIC-ACID TRANSFERASE/TRNA GUANINE-N 7 - -METHYLTRANSFERASE"/>
    <property type="match status" value="1"/>
</dbReference>
<dbReference type="PANTHER" id="PTHR23417:SF14">
    <property type="entry name" value="PENTACOTRIPEPTIDE-REPEAT REGION OF PRORP DOMAIN-CONTAINING PROTEIN"/>
    <property type="match status" value="1"/>
</dbReference>
<dbReference type="Pfam" id="PF02390">
    <property type="entry name" value="Methyltransf_4"/>
    <property type="match status" value="1"/>
</dbReference>
<dbReference type="SUPFAM" id="SSF53335">
    <property type="entry name" value="S-adenosyl-L-methionine-dependent methyltransferases"/>
    <property type="match status" value="1"/>
</dbReference>
<dbReference type="PROSITE" id="PS51625">
    <property type="entry name" value="SAM_MT_TRMB"/>
    <property type="match status" value="1"/>
</dbReference>